<keyword id="KW-1185">Reference proteome</keyword>
<keyword id="KW-0687">Ribonucleoprotein</keyword>
<keyword id="KW-0689">Ribosomal protein</keyword>
<organism>
    <name type="scientific">Dichelobacter nodosus (strain VCS1703A)</name>
    <dbReference type="NCBI Taxonomy" id="246195"/>
    <lineage>
        <taxon>Bacteria</taxon>
        <taxon>Pseudomonadati</taxon>
        <taxon>Pseudomonadota</taxon>
        <taxon>Gammaproteobacteria</taxon>
        <taxon>Cardiobacteriales</taxon>
        <taxon>Cardiobacteriaceae</taxon>
        <taxon>Dichelobacter</taxon>
    </lineage>
</organism>
<dbReference type="EMBL" id="CP000513">
    <property type="protein sequence ID" value="ABQ13655.1"/>
    <property type="molecule type" value="Genomic_DNA"/>
</dbReference>
<dbReference type="RefSeq" id="WP_012031388.1">
    <property type="nucleotide sequence ID" value="NC_009446.1"/>
</dbReference>
<dbReference type="SMR" id="A5EXR7"/>
<dbReference type="STRING" id="246195.DNO_1081"/>
<dbReference type="KEGG" id="dno:DNO_1081"/>
<dbReference type="eggNOG" id="COG0828">
    <property type="taxonomic scope" value="Bacteria"/>
</dbReference>
<dbReference type="HOGENOM" id="CLU_159258_1_0_6"/>
<dbReference type="OrthoDB" id="9799244at2"/>
<dbReference type="Proteomes" id="UP000000248">
    <property type="component" value="Chromosome"/>
</dbReference>
<dbReference type="GO" id="GO:1990904">
    <property type="term" value="C:ribonucleoprotein complex"/>
    <property type="evidence" value="ECO:0007669"/>
    <property type="project" value="UniProtKB-KW"/>
</dbReference>
<dbReference type="GO" id="GO:0005840">
    <property type="term" value="C:ribosome"/>
    <property type="evidence" value="ECO:0007669"/>
    <property type="project" value="UniProtKB-KW"/>
</dbReference>
<dbReference type="GO" id="GO:0003735">
    <property type="term" value="F:structural constituent of ribosome"/>
    <property type="evidence" value="ECO:0007669"/>
    <property type="project" value="InterPro"/>
</dbReference>
<dbReference type="GO" id="GO:0006412">
    <property type="term" value="P:translation"/>
    <property type="evidence" value="ECO:0007669"/>
    <property type="project" value="UniProtKB-UniRule"/>
</dbReference>
<dbReference type="Gene3D" id="1.20.5.1150">
    <property type="entry name" value="Ribosomal protein S8"/>
    <property type="match status" value="1"/>
</dbReference>
<dbReference type="HAMAP" id="MF_00358">
    <property type="entry name" value="Ribosomal_bS21"/>
    <property type="match status" value="1"/>
</dbReference>
<dbReference type="InterPro" id="IPR001911">
    <property type="entry name" value="Ribosomal_bS21"/>
</dbReference>
<dbReference type="InterPro" id="IPR038380">
    <property type="entry name" value="Ribosomal_bS21_sf"/>
</dbReference>
<dbReference type="NCBIfam" id="TIGR00030">
    <property type="entry name" value="S21p"/>
    <property type="match status" value="1"/>
</dbReference>
<dbReference type="PANTHER" id="PTHR21109">
    <property type="entry name" value="MITOCHONDRIAL 28S RIBOSOMAL PROTEIN S21"/>
    <property type="match status" value="1"/>
</dbReference>
<dbReference type="PANTHER" id="PTHR21109:SF22">
    <property type="entry name" value="SMALL RIBOSOMAL SUBUNIT PROTEIN BS21"/>
    <property type="match status" value="1"/>
</dbReference>
<dbReference type="Pfam" id="PF01165">
    <property type="entry name" value="Ribosomal_S21"/>
    <property type="match status" value="1"/>
</dbReference>
<dbReference type="PRINTS" id="PR00976">
    <property type="entry name" value="RIBOSOMALS21"/>
</dbReference>
<protein>
    <recommendedName>
        <fullName evidence="1">Small ribosomal subunit protein bS21</fullName>
    </recommendedName>
    <alternativeName>
        <fullName evidence="2">30S ribosomal protein S21</fullName>
    </alternativeName>
</protein>
<accession>A5EXR7</accession>
<name>RS21_DICNV</name>
<feature type="chain" id="PRO_1000005115" description="Small ribosomal subunit protein bS21">
    <location>
        <begin position="1"/>
        <end position="71"/>
    </location>
</feature>
<proteinExistence type="inferred from homology"/>
<comment type="similarity">
    <text evidence="1">Belongs to the bacterial ribosomal protein bS21 family.</text>
</comment>
<reference key="1">
    <citation type="journal article" date="2007" name="Nat. Biotechnol.">
        <title>Genome sequence and identification of candidate vaccine antigens from the animal pathogen Dichelobacter nodosus.</title>
        <authorList>
            <person name="Myers G.S.A."/>
            <person name="Parker D."/>
            <person name="Al-Hasani K."/>
            <person name="Kennan R.M."/>
            <person name="Seemann T."/>
            <person name="Ren Q."/>
            <person name="Badger J.H."/>
            <person name="Selengut J.D."/>
            <person name="Deboy R.T."/>
            <person name="Tettelin H."/>
            <person name="Boyce J.D."/>
            <person name="McCarl V.P."/>
            <person name="Han X."/>
            <person name="Nelson W.C."/>
            <person name="Madupu R."/>
            <person name="Mohamoud Y."/>
            <person name="Holley T."/>
            <person name="Fedorova N."/>
            <person name="Khouri H."/>
            <person name="Bottomley S.P."/>
            <person name="Whittington R.J."/>
            <person name="Adler B."/>
            <person name="Songer J.G."/>
            <person name="Rood J.I."/>
            <person name="Paulsen I.T."/>
        </authorList>
    </citation>
    <scope>NUCLEOTIDE SEQUENCE [LARGE SCALE GENOMIC DNA]</scope>
    <source>
        <strain>VCS1703A</strain>
    </source>
</reference>
<gene>
    <name evidence="1" type="primary">rpsU</name>
    <name type="ordered locus">DNO_1081</name>
</gene>
<sequence length="71" mass="8617">MPSVKVRDNEPFDVAMRRFKRSCEKAGVLAEVRSREFYEKPTQERKRKLAAAVKRNSRRLKKERSRFERLY</sequence>
<evidence type="ECO:0000255" key="1">
    <source>
        <dbReference type="HAMAP-Rule" id="MF_00358"/>
    </source>
</evidence>
<evidence type="ECO:0000305" key="2"/>